<feature type="chain" id="PRO_1000097354" description="Peptide deformylase">
    <location>
        <begin position="1"/>
        <end position="166"/>
    </location>
</feature>
<feature type="active site" evidence="1">
    <location>
        <position position="131"/>
    </location>
</feature>
<feature type="binding site" evidence="1">
    <location>
        <position position="88"/>
    </location>
    <ligand>
        <name>Fe cation</name>
        <dbReference type="ChEBI" id="CHEBI:24875"/>
    </ligand>
</feature>
<feature type="binding site" evidence="1">
    <location>
        <position position="130"/>
    </location>
    <ligand>
        <name>Fe cation</name>
        <dbReference type="ChEBI" id="CHEBI:24875"/>
    </ligand>
</feature>
<feature type="binding site" evidence="1">
    <location>
        <position position="134"/>
    </location>
    <ligand>
        <name>Fe cation</name>
        <dbReference type="ChEBI" id="CHEBI:24875"/>
    </ligand>
</feature>
<reference key="1">
    <citation type="submission" date="2008-01" db="EMBL/GenBank/DDBJ databases">
        <title>Complete sequence of Thermoanaerobacter sp. X514.</title>
        <authorList>
            <consortium name="US DOE Joint Genome Institute"/>
            <person name="Copeland A."/>
            <person name="Lucas S."/>
            <person name="Lapidus A."/>
            <person name="Barry K."/>
            <person name="Glavina del Rio T."/>
            <person name="Dalin E."/>
            <person name="Tice H."/>
            <person name="Pitluck S."/>
            <person name="Bruce D."/>
            <person name="Goodwin L."/>
            <person name="Saunders E."/>
            <person name="Brettin T."/>
            <person name="Detter J.C."/>
            <person name="Han C."/>
            <person name="Schmutz J."/>
            <person name="Larimer F."/>
            <person name="Land M."/>
            <person name="Hauser L."/>
            <person name="Kyrpides N."/>
            <person name="Kim E."/>
            <person name="Hemme C."/>
            <person name="Fields M.W."/>
            <person name="He Z."/>
            <person name="Zhou J."/>
            <person name="Richardson P."/>
        </authorList>
    </citation>
    <scope>NUCLEOTIDE SEQUENCE [LARGE SCALE GENOMIC DNA]</scope>
    <source>
        <strain>X514</strain>
    </source>
</reference>
<comment type="function">
    <text evidence="1">Removes the formyl group from the N-terminal Met of newly synthesized proteins. Requires at least a dipeptide for an efficient rate of reaction. N-terminal L-methionine is a prerequisite for activity but the enzyme has broad specificity at other positions.</text>
</comment>
<comment type="catalytic activity">
    <reaction evidence="1">
        <text>N-terminal N-formyl-L-methionyl-[peptide] + H2O = N-terminal L-methionyl-[peptide] + formate</text>
        <dbReference type="Rhea" id="RHEA:24420"/>
        <dbReference type="Rhea" id="RHEA-COMP:10639"/>
        <dbReference type="Rhea" id="RHEA-COMP:10640"/>
        <dbReference type="ChEBI" id="CHEBI:15377"/>
        <dbReference type="ChEBI" id="CHEBI:15740"/>
        <dbReference type="ChEBI" id="CHEBI:49298"/>
        <dbReference type="ChEBI" id="CHEBI:64731"/>
        <dbReference type="EC" id="3.5.1.88"/>
    </reaction>
</comment>
<comment type="cofactor">
    <cofactor evidence="1">
        <name>Fe(2+)</name>
        <dbReference type="ChEBI" id="CHEBI:29033"/>
    </cofactor>
    <text evidence="1">Binds 1 Fe(2+) ion.</text>
</comment>
<comment type="similarity">
    <text evidence="1">Belongs to the polypeptide deformylase family.</text>
</comment>
<protein>
    <recommendedName>
        <fullName evidence="1">Peptide deformylase</fullName>
        <shortName evidence="1">PDF</shortName>
        <ecNumber evidence="1">3.5.1.88</ecNumber>
    </recommendedName>
    <alternativeName>
        <fullName evidence="1">Polypeptide deformylase</fullName>
    </alternativeName>
</protein>
<sequence>MAIRYVRKIGDEVLRKKAKPVTEINSHILTILEDMAQTMYLNDGVGLAANQIGVLRRLVVIDVGEGLLELINPEIVYEEGEQVGAEGCLSIPGVVGEVKRPKKVKVKYLDREGKEREIEGEDLLARALCHEIDHLNGVLFIDKAIRFLDEEEKEQVKYFGNMSRGW</sequence>
<proteinExistence type="inferred from homology"/>
<gene>
    <name evidence="1" type="primary">def</name>
    <name type="ordered locus">Teth514_1757</name>
</gene>
<name>DEF_THEPX</name>
<evidence type="ECO:0000255" key="1">
    <source>
        <dbReference type="HAMAP-Rule" id="MF_00163"/>
    </source>
</evidence>
<organism>
    <name type="scientific">Thermoanaerobacter sp. (strain X514)</name>
    <dbReference type="NCBI Taxonomy" id="399726"/>
    <lineage>
        <taxon>Bacteria</taxon>
        <taxon>Bacillati</taxon>
        <taxon>Bacillota</taxon>
        <taxon>Clostridia</taxon>
        <taxon>Thermoanaerobacterales</taxon>
        <taxon>Thermoanaerobacteraceae</taxon>
        <taxon>Thermoanaerobacter</taxon>
    </lineage>
</organism>
<keyword id="KW-0378">Hydrolase</keyword>
<keyword id="KW-0408">Iron</keyword>
<keyword id="KW-0479">Metal-binding</keyword>
<keyword id="KW-0648">Protein biosynthesis</keyword>
<accession>B0K292</accession>
<dbReference type="EC" id="3.5.1.88" evidence="1"/>
<dbReference type="EMBL" id="CP000923">
    <property type="protein sequence ID" value="ABY93043.1"/>
    <property type="molecule type" value="Genomic_DNA"/>
</dbReference>
<dbReference type="RefSeq" id="WP_009052442.1">
    <property type="nucleotide sequence ID" value="NC_010320.1"/>
</dbReference>
<dbReference type="SMR" id="B0K292"/>
<dbReference type="KEGG" id="tex:Teth514_1757"/>
<dbReference type="HOGENOM" id="CLU_061901_4_2_9"/>
<dbReference type="Proteomes" id="UP000002155">
    <property type="component" value="Chromosome"/>
</dbReference>
<dbReference type="GO" id="GO:0046872">
    <property type="term" value="F:metal ion binding"/>
    <property type="evidence" value="ECO:0007669"/>
    <property type="project" value="UniProtKB-KW"/>
</dbReference>
<dbReference type="GO" id="GO:0042586">
    <property type="term" value="F:peptide deformylase activity"/>
    <property type="evidence" value="ECO:0007669"/>
    <property type="project" value="UniProtKB-UniRule"/>
</dbReference>
<dbReference type="GO" id="GO:0043686">
    <property type="term" value="P:co-translational protein modification"/>
    <property type="evidence" value="ECO:0007669"/>
    <property type="project" value="TreeGrafter"/>
</dbReference>
<dbReference type="GO" id="GO:0006412">
    <property type="term" value="P:translation"/>
    <property type="evidence" value="ECO:0007669"/>
    <property type="project" value="UniProtKB-UniRule"/>
</dbReference>
<dbReference type="CDD" id="cd00487">
    <property type="entry name" value="Pep_deformylase"/>
    <property type="match status" value="1"/>
</dbReference>
<dbReference type="FunFam" id="3.90.45.10:FF:000005">
    <property type="entry name" value="Peptide deformylase"/>
    <property type="match status" value="1"/>
</dbReference>
<dbReference type="Gene3D" id="3.90.45.10">
    <property type="entry name" value="Peptide deformylase"/>
    <property type="match status" value="1"/>
</dbReference>
<dbReference type="HAMAP" id="MF_00163">
    <property type="entry name" value="Pep_deformylase"/>
    <property type="match status" value="1"/>
</dbReference>
<dbReference type="InterPro" id="IPR023635">
    <property type="entry name" value="Peptide_deformylase"/>
</dbReference>
<dbReference type="InterPro" id="IPR036821">
    <property type="entry name" value="Peptide_deformylase_sf"/>
</dbReference>
<dbReference type="NCBIfam" id="TIGR00079">
    <property type="entry name" value="pept_deformyl"/>
    <property type="match status" value="1"/>
</dbReference>
<dbReference type="NCBIfam" id="NF001159">
    <property type="entry name" value="PRK00150.1-3"/>
    <property type="match status" value="1"/>
</dbReference>
<dbReference type="PANTHER" id="PTHR10458">
    <property type="entry name" value="PEPTIDE DEFORMYLASE"/>
    <property type="match status" value="1"/>
</dbReference>
<dbReference type="PANTHER" id="PTHR10458:SF22">
    <property type="entry name" value="PEPTIDE DEFORMYLASE"/>
    <property type="match status" value="1"/>
</dbReference>
<dbReference type="Pfam" id="PF01327">
    <property type="entry name" value="Pep_deformylase"/>
    <property type="match status" value="1"/>
</dbReference>
<dbReference type="PIRSF" id="PIRSF004749">
    <property type="entry name" value="Pep_def"/>
    <property type="match status" value="1"/>
</dbReference>
<dbReference type="PRINTS" id="PR01576">
    <property type="entry name" value="PDEFORMYLASE"/>
</dbReference>
<dbReference type="SUPFAM" id="SSF56420">
    <property type="entry name" value="Peptide deformylase"/>
    <property type="match status" value="1"/>
</dbReference>